<gene>
    <name type="primary">ftsE</name>
    <name type="ordered locus">BSU35260</name>
</gene>
<feature type="chain" id="PRO_0000380255" description="Cell division ATP-binding protein FtsE">
    <location>
        <begin position="1"/>
        <end position="228"/>
    </location>
</feature>
<feature type="domain" description="ABC transporter" evidence="1">
    <location>
        <begin position="2"/>
        <end position="227"/>
    </location>
</feature>
<feature type="binding site" evidence="1">
    <location>
        <begin position="35"/>
        <end position="42"/>
    </location>
    <ligand>
        <name>ATP</name>
        <dbReference type="ChEBI" id="CHEBI:30616"/>
    </ligand>
</feature>
<accession>O34814</accession>
<accession>Q795D6</accession>
<dbReference type="EMBL" id="AF017113">
    <property type="protein sequence ID" value="AAC67262.1"/>
    <property type="molecule type" value="Genomic_DNA"/>
</dbReference>
<dbReference type="EMBL" id="AL009126">
    <property type="protein sequence ID" value="CAB15543.1"/>
    <property type="molecule type" value="Genomic_DNA"/>
</dbReference>
<dbReference type="PIR" id="D69627">
    <property type="entry name" value="D69627"/>
</dbReference>
<dbReference type="RefSeq" id="NP_391406.1">
    <property type="nucleotide sequence ID" value="NC_000964.3"/>
</dbReference>
<dbReference type="RefSeq" id="WP_003228039.1">
    <property type="nucleotide sequence ID" value="NZ_OZ025638.1"/>
</dbReference>
<dbReference type="SMR" id="O34814"/>
<dbReference type="FunCoup" id="O34814">
    <property type="interactions" value="244"/>
</dbReference>
<dbReference type="STRING" id="224308.BSU35260"/>
<dbReference type="TCDB" id="3.A.1.140.8">
    <property type="family name" value="the atp-binding cassette (abc) superfamily"/>
</dbReference>
<dbReference type="PaxDb" id="224308-BSU35260"/>
<dbReference type="EnsemblBacteria" id="CAB15543">
    <property type="protein sequence ID" value="CAB15543"/>
    <property type="gene ID" value="BSU_35260"/>
</dbReference>
<dbReference type="GeneID" id="936681"/>
<dbReference type="KEGG" id="bsu:BSU35260"/>
<dbReference type="PATRIC" id="fig|224308.179.peg.3816"/>
<dbReference type="eggNOG" id="COG2884">
    <property type="taxonomic scope" value="Bacteria"/>
</dbReference>
<dbReference type="InParanoid" id="O34814"/>
<dbReference type="OrthoDB" id="9791546at2"/>
<dbReference type="PhylomeDB" id="O34814"/>
<dbReference type="BioCyc" id="BSUB:BSU35260-MONOMER"/>
<dbReference type="Proteomes" id="UP000001570">
    <property type="component" value="Chromosome"/>
</dbReference>
<dbReference type="GO" id="GO:0005886">
    <property type="term" value="C:plasma membrane"/>
    <property type="evidence" value="ECO:0000314"/>
    <property type="project" value="UniProtKB"/>
</dbReference>
<dbReference type="GO" id="GO:0005524">
    <property type="term" value="F:ATP binding"/>
    <property type="evidence" value="ECO:0007669"/>
    <property type="project" value="UniProtKB-KW"/>
</dbReference>
<dbReference type="GO" id="GO:0016887">
    <property type="term" value="F:ATP hydrolysis activity"/>
    <property type="evidence" value="ECO:0007669"/>
    <property type="project" value="InterPro"/>
</dbReference>
<dbReference type="GO" id="GO:0022857">
    <property type="term" value="F:transmembrane transporter activity"/>
    <property type="evidence" value="ECO:0000318"/>
    <property type="project" value="GO_Central"/>
</dbReference>
<dbReference type="GO" id="GO:0008356">
    <property type="term" value="P:asymmetric cell division"/>
    <property type="evidence" value="ECO:0000315"/>
    <property type="project" value="UniProtKB"/>
</dbReference>
<dbReference type="GO" id="GO:0090529">
    <property type="term" value="P:cell septum assembly"/>
    <property type="evidence" value="ECO:0000315"/>
    <property type="project" value="UniProtKB"/>
</dbReference>
<dbReference type="GO" id="GO:0045881">
    <property type="term" value="P:positive regulation of sporulation resulting in formation of a cellular spore"/>
    <property type="evidence" value="ECO:0000315"/>
    <property type="project" value="UniProtKB"/>
</dbReference>
<dbReference type="GO" id="GO:0070297">
    <property type="term" value="P:regulation of phosphorelay signal transduction system"/>
    <property type="evidence" value="ECO:0000315"/>
    <property type="project" value="UniProtKB"/>
</dbReference>
<dbReference type="GO" id="GO:0055085">
    <property type="term" value="P:transmembrane transport"/>
    <property type="evidence" value="ECO:0000318"/>
    <property type="project" value="GO_Central"/>
</dbReference>
<dbReference type="CDD" id="cd03292">
    <property type="entry name" value="ABC_FtsE"/>
    <property type="match status" value="1"/>
</dbReference>
<dbReference type="FunFam" id="3.40.50.300:FF:000056">
    <property type="entry name" value="Cell division ATP-binding protein FtsE"/>
    <property type="match status" value="1"/>
</dbReference>
<dbReference type="Gene3D" id="3.40.50.300">
    <property type="entry name" value="P-loop containing nucleotide triphosphate hydrolases"/>
    <property type="match status" value="1"/>
</dbReference>
<dbReference type="InterPro" id="IPR003593">
    <property type="entry name" value="AAA+_ATPase"/>
</dbReference>
<dbReference type="InterPro" id="IPR003439">
    <property type="entry name" value="ABC_transporter-like_ATP-bd"/>
</dbReference>
<dbReference type="InterPro" id="IPR017871">
    <property type="entry name" value="ABC_transporter-like_CS"/>
</dbReference>
<dbReference type="InterPro" id="IPR015854">
    <property type="entry name" value="ABC_transpr_LolD-like"/>
</dbReference>
<dbReference type="InterPro" id="IPR005286">
    <property type="entry name" value="Cell_div_FtsE"/>
</dbReference>
<dbReference type="InterPro" id="IPR027417">
    <property type="entry name" value="P-loop_NTPase"/>
</dbReference>
<dbReference type="NCBIfam" id="TIGR02673">
    <property type="entry name" value="FtsE"/>
    <property type="match status" value="1"/>
</dbReference>
<dbReference type="PANTHER" id="PTHR24220:SF470">
    <property type="entry name" value="CELL DIVISION ATP-BINDING PROTEIN FTSE"/>
    <property type="match status" value="1"/>
</dbReference>
<dbReference type="PANTHER" id="PTHR24220">
    <property type="entry name" value="IMPORT ATP-BINDING PROTEIN"/>
    <property type="match status" value="1"/>
</dbReference>
<dbReference type="Pfam" id="PF00005">
    <property type="entry name" value="ABC_tran"/>
    <property type="match status" value="1"/>
</dbReference>
<dbReference type="SMART" id="SM00382">
    <property type="entry name" value="AAA"/>
    <property type="match status" value="1"/>
</dbReference>
<dbReference type="SUPFAM" id="SSF52540">
    <property type="entry name" value="P-loop containing nucleoside triphosphate hydrolases"/>
    <property type="match status" value="1"/>
</dbReference>
<dbReference type="PROSITE" id="PS00211">
    <property type="entry name" value="ABC_TRANSPORTER_1"/>
    <property type="match status" value="1"/>
</dbReference>
<dbReference type="PROSITE" id="PS50893">
    <property type="entry name" value="ABC_TRANSPORTER_2"/>
    <property type="match status" value="1"/>
</dbReference>
<name>FTSE_BACSU</name>
<sequence>MIEMKEVYKAYPNGVKALNGISVTIHPGEFVYVVGPSGAGKSTFIKMIYREEKPTKGQILINHKDLATIKEKEIPFVRRKIGVVFQDFKLLPKLTVFENVAFALEVIGEQPSVIKKRVLEVLDLVQLKHKARQFPDQLSGGEQQRVSIARSIVNNPDVVIADEPTGNLDPDTSWEVMKTLEEINNRGTTVVMATHNKEIVNTMKKRVIAIEDGIIVRDESRGEYGSYD</sequence>
<proteinExistence type="evidence at protein level"/>
<evidence type="ECO:0000255" key="1">
    <source>
        <dbReference type="PROSITE-ProRule" id="PRU00434"/>
    </source>
</evidence>
<evidence type="ECO:0000269" key="2">
    <source>
    </source>
</evidence>
<evidence type="ECO:0000305" key="3"/>
<protein>
    <recommendedName>
        <fullName>Cell division ATP-binding protein FtsE</fullName>
    </recommendedName>
</protein>
<keyword id="KW-0067">ATP-binding</keyword>
<keyword id="KW-0131">Cell cycle</keyword>
<keyword id="KW-0132">Cell division</keyword>
<keyword id="KW-1003">Cell membrane</keyword>
<keyword id="KW-0472">Membrane</keyword>
<keyword id="KW-0547">Nucleotide-binding</keyword>
<keyword id="KW-1185">Reference proteome</keyword>
<keyword id="KW-0813">Transport</keyword>
<organism>
    <name type="scientific">Bacillus subtilis (strain 168)</name>
    <dbReference type="NCBI Taxonomy" id="224308"/>
    <lineage>
        <taxon>Bacteria</taxon>
        <taxon>Bacillati</taxon>
        <taxon>Bacillota</taxon>
        <taxon>Bacilli</taxon>
        <taxon>Bacillales</taxon>
        <taxon>Bacillaceae</taxon>
        <taxon>Bacillus</taxon>
    </lineage>
</organism>
<comment type="function">
    <text evidence="2">Part of the ABC transporter FtsEX involved in sporulation. May act as an importer, possibly at the top of a hierarchical cascade leading to the correct temporal initiation of sporulation. Acts upstream of the histidine kinases KinA, KinB and KinC, the RapA phosphatase and the Spo0A sporulation protein.</text>
</comment>
<comment type="subunit">
    <text evidence="3">Interacts with FtsX.</text>
</comment>
<comment type="subcellular location">
    <subcellularLocation>
        <location evidence="2">Cell membrane</location>
        <topology evidence="2">Peripheral membrane protein</topology>
    </subcellularLocation>
    <text>Unlike the E.coli ortholog, localization is not restricted to division septa, nor is localization dependent on FtsZ.</text>
</comment>
<comment type="disruption phenotype">
    <text evidence="2">Cells lacking this gene and ftsX, the next gene in the operon, delay sporulation onset, as a result of which they form a medial rather than polar septum at the onset of sporulation. This is presumably due to slower phosphorylation and activation of the spo0A transcriptional regulator. However, at later time points these cells undergo polar division and eventually form smaller than wild-type mature spores.</text>
</comment>
<comment type="similarity">
    <text evidence="3">Belongs to the ABC transporter superfamily.</text>
</comment>
<reference key="1">
    <citation type="submission" date="1997-08" db="EMBL/GenBank/DDBJ databases">
        <title>Nucleotide sequence of the 300-304 chromosomal segment of Bacillus subtilis.</title>
        <authorList>
            <person name="Lazarevic V."/>
            <person name="Soldo B."/>
            <person name="Rivolta C."/>
            <person name="Reynolds S."/>
            <person name="Mauel C."/>
            <person name="Karamata D."/>
        </authorList>
    </citation>
    <scope>NUCLEOTIDE SEQUENCE [GENOMIC DNA]</scope>
</reference>
<reference key="2">
    <citation type="journal article" date="1997" name="Nature">
        <title>The complete genome sequence of the Gram-positive bacterium Bacillus subtilis.</title>
        <authorList>
            <person name="Kunst F."/>
            <person name="Ogasawara N."/>
            <person name="Moszer I."/>
            <person name="Albertini A.M."/>
            <person name="Alloni G."/>
            <person name="Azevedo V."/>
            <person name="Bertero M.G."/>
            <person name="Bessieres P."/>
            <person name="Bolotin A."/>
            <person name="Borchert S."/>
            <person name="Borriss R."/>
            <person name="Boursier L."/>
            <person name="Brans A."/>
            <person name="Braun M."/>
            <person name="Brignell S.C."/>
            <person name="Bron S."/>
            <person name="Brouillet S."/>
            <person name="Bruschi C.V."/>
            <person name="Caldwell B."/>
            <person name="Capuano V."/>
            <person name="Carter N.M."/>
            <person name="Choi S.-K."/>
            <person name="Codani J.-J."/>
            <person name="Connerton I.F."/>
            <person name="Cummings N.J."/>
            <person name="Daniel R.A."/>
            <person name="Denizot F."/>
            <person name="Devine K.M."/>
            <person name="Duesterhoeft A."/>
            <person name="Ehrlich S.D."/>
            <person name="Emmerson P.T."/>
            <person name="Entian K.-D."/>
            <person name="Errington J."/>
            <person name="Fabret C."/>
            <person name="Ferrari E."/>
            <person name="Foulger D."/>
            <person name="Fritz C."/>
            <person name="Fujita M."/>
            <person name="Fujita Y."/>
            <person name="Fuma S."/>
            <person name="Galizzi A."/>
            <person name="Galleron N."/>
            <person name="Ghim S.-Y."/>
            <person name="Glaser P."/>
            <person name="Goffeau A."/>
            <person name="Golightly E.J."/>
            <person name="Grandi G."/>
            <person name="Guiseppi G."/>
            <person name="Guy B.J."/>
            <person name="Haga K."/>
            <person name="Haiech J."/>
            <person name="Harwood C.R."/>
            <person name="Henaut A."/>
            <person name="Hilbert H."/>
            <person name="Holsappel S."/>
            <person name="Hosono S."/>
            <person name="Hullo M.-F."/>
            <person name="Itaya M."/>
            <person name="Jones L.-M."/>
            <person name="Joris B."/>
            <person name="Karamata D."/>
            <person name="Kasahara Y."/>
            <person name="Klaerr-Blanchard M."/>
            <person name="Klein C."/>
            <person name="Kobayashi Y."/>
            <person name="Koetter P."/>
            <person name="Koningstein G."/>
            <person name="Krogh S."/>
            <person name="Kumano M."/>
            <person name="Kurita K."/>
            <person name="Lapidus A."/>
            <person name="Lardinois S."/>
            <person name="Lauber J."/>
            <person name="Lazarevic V."/>
            <person name="Lee S.-M."/>
            <person name="Levine A."/>
            <person name="Liu H."/>
            <person name="Masuda S."/>
            <person name="Mauel C."/>
            <person name="Medigue C."/>
            <person name="Medina N."/>
            <person name="Mellado R.P."/>
            <person name="Mizuno M."/>
            <person name="Moestl D."/>
            <person name="Nakai S."/>
            <person name="Noback M."/>
            <person name="Noone D."/>
            <person name="O'Reilly M."/>
            <person name="Ogawa K."/>
            <person name="Ogiwara A."/>
            <person name="Oudega B."/>
            <person name="Park S.-H."/>
            <person name="Parro V."/>
            <person name="Pohl T.M."/>
            <person name="Portetelle D."/>
            <person name="Porwollik S."/>
            <person name="Prescott A.M."/>
            <person name="Presecan E."/>
            <person name="Pujic P."/>
            <person name="Purnelle B."/>
            <person name="Rapoport G."/>
            <person name="Rey M."/>
            <person name="Reynolds S."/>
            <person name="Rieger M."/>
            <person name="Rivolta C."/>
            <person name="Rocha E."/>
            <person name="Roche B."/>
            <person name="Rose M."/>
            <person name="Sadaie Y."/>
            <person name="Sato T."/>
            <person name="Scanlan E."/>
            <person name="Schleich S."/>
            <person name="Schroeter R."/>
            <person name="Scoffone F."/>
            <person name="Sekiguchi J."/>
            <person name="Sekowska A."/>
            <person name="Seror S.J."/>
            <person name="Serror P."/>
            <person name="Shin B.-S."/>
            <person name="Soldo B."/>
            <person name="Sorokin A."/>
            <person name="Tacconi E."/>
            <person name="Takagi T."/>
            <person name="Takahashi H."/>
            <person name="Takemaru K."/>
            <person name="Takeuchi M."/>
            <person name="Tamakoshi A."/>
            <person name="Tanaka T."/>
            <person name="Terpstra P."/>
            <person name="Tognoni A."/>
            <person name="Tosato V."/>
            <person name="Uchiyama S."/>
            <person name="Vandenbol M."/>
            <person name="Vannier F."/>
            <person name="Vassarotti A."/>
            <person name="Viari A."/>
            <person name="Wambutt R."/>
            <person name="Wedler E."/>
            <person name="Wedler H."/>
            <person name="Weitzenegger T."/>
            <person name="Winters P."/>
            <person name="Wipat A."/>
            <person name="Yamamoto H."/>
            <person name="Yamane K."/>
            <person name="Yasumoto K."/>
            <person name="Yata K."/>
            <person name="Yoshida K."/>
            <person name="Yoshikawa H.-F."/>
            <person name="Zumstein E."/>
            <person name="Yoshikawa H."/>
            <person name="Danchin A."/>
        </authorList>
    </citation>
    <scope>NUCLEOTIDE SEQUENCE [LARGE SCALE GENOMIC DNA]</scope>
    <source>
        <strain>168</strain>
    </source>
</reference>
<reference key="3">
    <citation type="journal article" date="2008" name="Mol. Microbiol.">
        <title>The FtsEX ABC transporter directs cellular differentiation in Bacillus subtilis.</title>
        <authorList>
            <person name="Garti-Levi S."/>
            <person name="Hazan R."/>
            <person name="Kain J."/>
            <person name="Fujita M."/>
            <person name="Ben-Yehuda S."/>
        </authorList>
    </citation>
    <scope>FUNCTION IN SPORULATION</scope>
    <scope>SUBCELLULAR LOCATION</scope>
    <scope>DISRUPTION PHENOTYPE</scope>
    <source>
        <strain>168 / PY79</strain>
    </source>
</reference>